<organism>
    <name type="scientific">Akkermansia muciniphila (strain ATCC BAA-835 / DSM 22959 / JCM 33894 / BCRC 81048 / CCUG 64013 / CIP 107961 / Muc)</name>
    <dbReference type="NCBI Taxonomy" id="349741"/>
    <lineage>
        <taxon>Bacteria</taxon>
        <taxon>Pseudomonadati</taxon>
        <taxon>Verrucomicrobiota</taxon>
        <taxon>Verrucomicrobiia</taxon>
        <taxon>Verrucomicrobiales</taxon>
        <taxon>Akkermansiaceae</taxon>
        <taxon>Akkermansia</taxon>
    </lineage>
</organism>
<proteinExistence type="inferred from homology"/>
<reference key="1">
    <citation type="journal article" date="2011" name="PLoS ONE">
        <title>The genome of Akkermansia muciniphila, a dedicated intestinal mucin degrader, and its use in exploring intestinal metagenomes.</title>
        <authorList>
            <person name="van Passel M.W."/>
            <person name="Kant R."/>
            <person name="Zoetendal E.G."/>
            <person name="Plugge C.M."/>
            <person name="Derrien M."/>
            <person name="Malfatti S.A."/>
            <person name="Chain P.S."/>
            <person name="Woyke T."/>
            <person name="Palva A."/>
            <person name="de Vos W.M."/>
            <person name="Smidt H."/>
        </authorList>
    </citation>
    <scope>NUCLEOTIDE SEQUENCE [LARGE SCALE GENOMIC DNA]</scope>
    <source>
        <strain>ATCC BAA-835 / DSM 22959 / JCM 33894 / BCRC 81048 / CCUG 64013 / CIP 107961 / Muc</strain>
    </source>
</reference>
<evidence type="ECO:0000255" key="1">
    <source>
        <dbReference type="HAMAP-Rule" id="MF_00228"/>
    </source>
</evidence>
<comment type="function">
    <text evidence="1">Catalyzes the phosphorylation of the hydroxyl group of 4-methyl-5-beta-hydroxyethylthiazole (THZ).</text>
</comment>
<comment type="catalytic activity">
    <reaction evidence="1">
        <text>5-(2-hydroxyethyl)-4-methylthiazole + ATP = 4-methyl-5-(2-phosphooxyethyl)-thiazole + ADP + H(+)</text>
        <dbReference type="Rhea" id="RHEA:24212"/>
        <dbReference type="ChEBI" id="CHEBI:15378"/>
        <dbReference type="ChEBI" id="CHEBI:17957"/>
        <dbReference type="ChEBI" id="CHEBI:30616"/>
        <dbReference type="ChEBI" id="CHEBI:58296"/>
        <dbReference type="ChEBI" id="CHEBI:456216"/>
        <dbReference type="EC" id="2.7.1.50"/>
    </reaction>
</comment>
<comment type="cofactor">
    <cofactor evidence="1">
        <name>Mg(2+)</name>
        <dbReference type="ChEBI" id="CHEBI:18420"/>
    </cofactor>
</comment>
<comment type="pathway">
    <text evidence="1">Cofactor biosynthesis; thiamine diphosphate biosynthesis; 4-methyl-5-(2-phosphoethyl)-thiazole from 5-(2-hydroxyethyl)-4-methylthiazole: step 1/1.</text>
</comment>
<comment type="similarity">
    <text evidence="1">Belongs to the Thz kinase family.</text>
</comment>
<gene>
    <name evidence="1" type="primary">thiM</name>
    <name type="ordered locus">Amuc_2016</name>
</gene>
<protein>
    <recommendedName>
        <fullName evidence="1">Hydroxyethylthiazole kinase</fullName>
        <ecNumber evidence="1">2.7.1.50</ecNumber>
    </recommendedName>
    <alternativeName>
        <fullName evidence="1">4-methyl-5-beta-hydroxyethylthiazole kinase</fullName>
        <shortName evidence="1">TH kinase</shortName>
        <shortName evidence="1">Thz kinase</shortName>
    </alternativeName>
</protein>
<keyword id="KW-0067">ATP-binding</keyword>
<keyword id="KW-0418">Kinase</keyword>
<keyword id="KW-0460">Magnesium</keyword>
<keyword id="KW-0479">Metal-binding</keyword>
<keyword id="KW-0547">Nucleotide-binding</keyword>
<keyword id="KW-1185">Reference proteome</keyword>
<keyword id="KW-0784">Thiamine biosynthesis</keyword>
<keyword id="KW-0808">Transferase</keyword>
<dbReference type="EC" id="2.7.1.50" evidence="1"/>
<dbReference type="EMBL" id="CP001071">
    <property type="protein sequence ID" value="ACD05826.1"/>
    <property type="molecule type" value="Genomic_DNA"/>
</dbReference>
<dbReference type="RefSeq" id="WP_012421040.1">
    <property type="nucleotide sequence ID" value="NC_010655.1"/>
</dbReference>
<dbReference type="SMR" id="B2UP55"/>
<dbReference type="STRING" id="349741.Amuc_2016"/>
<dbReference type="PaxDb" id="349741-Amuc_2016"/>
<dbReference type="KEGG" id="amu:Amuc_2016"/>
<dbReference type="eggNOG" id="COG2145">
    <property type="taxonomic scope" value="Bacteria"/>
</dbReference>
<dbReference type="HOGENOM" id="CLU_019943_0_1_0"/>
<dbReference type="OrthoDB" id="9778146at2"/>
<dbReference type="BioCyc" id="AMUC349741:G1GBX-2146-MONOMER"/>
<dbReference type="UniPathway" id="UPA00060">
    <property type="reaction ID" value="UER00139"/>
</dbReference>
<dbReference type="Proteomes" id="UP000001031">
    <property type="component" value="Chromosome"/>
</dbReference>
<dbReference type="GO" id="GO:0005524">
    <property type="term" value="F:ATP binding"/>
    <property type="evidence" value="ECO:0007669"/>
    <property type="project" value="UniProtKB-UniRule"/>
</dbReference>
<dbReference type="GO" id="GO:0004417">
    <property type="term" value="F:hydroxyethylthiazole kinase activity"/>
    <property type="evidence" value="ECO:0007669"/>
    <property type="project" value="UniProtKB-UniRule"/>
</dbReference>
<dbReference type="GO" id="GO:0000287">
    <property type="term" value="F:magnesium ion binding"/>
    <property type="evidence" value="ECO:0007669"/>
    <property type="project" value="UniProtKB-UniRule"/>
</dbReference>
<dbReference type="GO" id="GO:0009228">
    <property type="term" value="P:thiamine biosynthetic process"/>
    <property type="evidence" value="ECO:0007669"/>
    <property type="project" value="UniProtKB-KW"/>
</dbReference>
<dbReference type="GO" id="GO:0009229">
    <property type="term" value="P:thiamine diphosphate biosynthetic process"/>
    <property type="evidence" value="ECO:0007669"/>
    <property type="project" value="UniProtKB-UniRule"/>
</dbReference>
<dbReference type="CDD" id="cd01170">
    <property type="entry name" value="THZ_kinase"/>
    <property type="match status" value="1"/>
</dbReference>
<dbReference type="Gene3D" id="3.40.1190.20">
    <property type="match status" value="1"/>
</dbReference>
<dbReference type="HAMAP" id="MF_00228">
    <property type="entry name" value="Thz_kinase"/>
    <property type="match status" value="1"/>
</dbReference>
<dbReference type="InterPro" id="IPR000417">
    <property type="entry name" value="Hyethyz_kinase"/>
</dbReference>
<dbReference type="InterPro" id="IPR029056">
    <property type="entry name" value="Ribokinase-like"/>
</dbReference>
<dbReference type="NCBIfam" id="NF006830">
    <property type="entry name" value="PRK09355.1"/>
    <property type="match status" value="1"/>
</dbReference>
<dbReference type="Pfam" id="PF02110">
    <property type="entry name" value="HK"/>
    <property type="match status" value="1"/>
</dbReference>
<dbReference type="PIRSF" id="PIRSF000513">
    <property type="entry name" value="Thz_kinase"/>
    <property type="match status" value="1"/>
</dbReference>
<dbReference type="PRINTS" id="PR01099">
    <property type="entry name" value="HYETHTZKNASE"/>
</dbReference>
<dbReference type="SUPFAM" id="SSF53613">
    <property type="entry name" value="Ribokinase-like"/>
    <property type="match status" value="1"/>
</dbReference>
<name>THIM_AKKM8</name>
<sequence length="271" mass="27898">MLSSTDLVQAVTADLGKIRETAPLVLSLTNSVVQPLTANLLLAIGAVPAMLNDAEEAVDMLRSGTGALLVNLGTVTREQGAAMQTAVREANRLNIPWVLDPVAVGALSLRTRLAGQLKEQSPRIIRGNASEIMALAGYSSVTKGPESTSSSADALHAARELALHTGAAVLVTGRTDYSTDGRQVTATENGHAMMSRVTGVGCSMGALSAACAAVSPTPLQAAVSTAVLMGIAGEMAFEQSPSPGSFAVSLLDSLYALSPEDVVRRARFLSL</sequence>
<accession>B2UP55</accession>
<feature type="chain" id="PRO_0000383818" description="Hydroxyethylthiazole kinase">
    <location>
        <begin position="1"/>
        <end position="271"/>
    </location>
</feature>
<feature type="binding site" evidence="1">
    <location>
        <position position="50"/>
    </location>
    <ligand>
        <name>substrate</name>
    </ligand>
</feature>
<feature type="binding site" evidence="1">
    <location>
        <position position="126"/>
    </location>
    <ligand>
        <name>ATP</name>
        <dbReference type="ChEBI" id="CHEBI:30616"/>
    </ligand>
</feature>
<feature type="binding site" evidence="1">
    <location>
        <position position="172"/>
    </location>
    <ligand>
        <name>ATP</name>
        <dbReference type="ChEBI" id="CHEBI:30616"/>
    </ligand>
</feature>
<feature type="binding site" evidence="1">
    <location>
        <position position="199"/>
    </location>
    <ligand>
        <name>substrate</name>
    </ligand>
</feature>